<accession>Q6PGV1</accession>
<keyword id="KW-0970">Cilium biogenesis/degradation</keyword>
<keyword id="KW-0375">Hydrogen ion transport</keyword>
<keyword id="KW-0406">Ion transport</keyword>
<keyword id="KW-0458">Lysosome</keyword>
<keyword id="KW-0472">Membrane</keyword>
<keyword id="KW-1185">Reference proteome</keyword>
<keyword id="KW-0813">Transport</keyword>
<sequence>MPFSELYFNVDNGYLEGLVRGFKAGILSQADYLNLVQCETLEDLKLHLQSTDYGSFLANEASPLTVSVIDDKLKEKMVVEFRHMRNQSYEPLASFMDFITYSYMIDNVILLITGTLHQRAISELVPKCHPLGSFEQMEAVNIAQTPAELYNAILVDTPLAAFFQDCISEQDLDEMNIEIIRNTLYKAYLEAFYKFCTTLGGTTADTMCPILEFEADRRAFIITINSFGTELSKEDRAKLFPHCGKLYPEGLAQLARADDYEQVKAVAEYYPEYKLLFEGAGSNPGDKTLEDRFFEHEVKLNKLAFLNQFHFSVFYAYVKLKEQECRNIVWIAECIAQRHRAKIDNYIPIF</sequence>
<comment type="function">
    <text evidence="1 2 3">Subunit of the V0 complex of vacuolar(H+)-ATPase (V-ATPase), a multisubunit enzyme composed of a peripheral complex (V1) that hydrolyzes ATP and a membrane integral complex (V0) that translocates protons (By similarity). V-ATPase is responsible for acidifying and maintaining the pH of intracellular compartments and in some cell types, is targeted to the plasma membrane, where it is responsible for acidifying the extracellular environment (By similarity). May play a role in coupling of proton transport and ATP hydrolysis (By similarity). In aerobic conditions, involved in intracellular iron homeostasis, thus triggering the activity of Fe(2+) prolyl hydroxylase (PHD) enzymes, and leading to HIF1A hydroxylation and subsequent proteasomal degradation (By similarity). May play a role in cilium biogenesis through regulation of the transport and the localization of proteins to the cilium (PubMed:21844891).</text>
</comment>
<comment type="subunit">
    <text evidence="2">V-ATPase is a heteromultimeric enzyme made up of two complexes: the ATP-hydrolytic V1 complex and the proton translocation V0 complex (By similarity). The V1 complex consists of three catalytic AB heterodimers that form a heterohexamer, three peripheral stalks each consisting of EG heterodimers, one central rotor including subunits D and F, and the regulatory subunits C and H (By similarity). The proton translocation complex V0 consists of the proton transport subunit a, a ring of proteolipid subunits c9c'', rotary subunit d, subunits e and f, and the accessory subunits ATP6AP1/Ac45 and ATP6AP2/PRR (By similarity).</text>
</comment>
<comment type="subcellular location">
    <subcellularLocation>
        <location evidence="2">Membrane</location>
        <topology evidence="2">Peripheral membrane protein</topology>
        <orientation evidence="2">Cytoplasmic side</orientation>
    </subcellularLocation>
    <subcellularLocation>
        <location evidence="2">Lysosome membrane</location>
    </subcellularLocation>
    <text evidence="3">Localizes to centrosome and the base of the cilium.</text>
</comment>
<comment type="similarity">
    <text evidence="4">Belongs to the V-ATPase V0D/AC39 subunit family.</text>
</comment>
<reference key="1">
    <citation type="journal article" date="2004" name="Proc. Natl. Acad. Sci. U.S.A.">
        <title>Identification of 315 genes essential for early zebrafish development.</title>
        <authorList>
            <person name="Amsterdam A."/>
            <person name="Nissen R.M."/>
            <person name="Sun Z."/>
            <person name="Swindell E.C."/>
            <person name="Farrington S."/>
            <person name="Hopkins N."/>
        </authorList>
    </citation>
    <scope>NUCLEOTIDE SEQUENCE [LARGE SCALE MRNA]</scope>
    <source>
        <tissue>Embryo</tissue>
    </source>
</reference>
<reference key="2">
    <citation type="journal article" date="2013" name="Nature">
        <title>The zebrafish reference genome sequence and its relationship to the human genome.</title>
        <authorList>
            <person name="Howe K."/>
            <person name="Clark M.D."/>
            <person name="Torroja C.F."/>
            <person name="Torrance J."/>
            <person name="Berthelot C."/>
            <person name="Muffato M."/>
            <person name="Collins J.E."/>
            <person name="Humphray S."/>
            <person name="McLaren K."/>
            <person name="Matthews L."/>
            <person name="McLaren S."/>
            <person name="Sealy I."/>
            <person name="Caccamo M."/>
            <person name="Churcher C."/>
            <person name="Scott C."/>
            <person name="Barrett J.C."/>
            <person name="Koch R."/>
            <person name="Rauch G.J."/>
            <person name="White S."/>
            <person name="Chow W."/>
            <person name="Kilian B."/>
            <person name="Quintais L.T."/>
            <person name="Guerra-Assuncao J.A."/>
            <person name="Zhou Y."/>
            <person name="Gu Y."/>
            <person name="Yen J."/>
            <person name="Vogel J.H."/>
            <person name="Eyre T."/>
            <person name="Redmond S."/>
            <person name="Banerjee R."/>
            <person name="Chi J."/>
            <person name="Fu B."/>
            <person name="Langley E."/>
            <person name="Maguire S.F."/>
            <person name="Laird G.K."/>
            <person name="Lloyd D."/>
            <person name="Kenyon E."/>
            <person name="Donaldson S."/>
            <person name="Sehra H."/>
            <person name="Almeida-King J."/>
            <person name="Loveland J."/>
            <person name="Trevanion S."/>
            <person name="Jones M."/>
            <person name="Quail M."/>
            <person name="Willey D."/>
            <person name="Hunt A."/>
            <person name="Burton J."/>
            <person name="Sims S."/>
            <person name="McLay K."/>
            <person name="Plumb B."/>
            <person name="Davis J."/>
            <person name="Clee C."/>
            <person name="Oliver K."/>
            <person name="Clark R."/>
            <person name="Riddle C."/>
            <person name="Elliot D."/>
            <person name="Threadgold G."/>
            <person name="Harden G."/>
            <person name="Ware D."/>
            <person name="Begum S."/>
            <person name="Mortimore B."/>
            <person name="Kerry G."/>
            <person name="Heath P."/>
            <person name="Phillimore B."/>
            <person name="Tracey A."/>
            <person name="Corby N."/>
            <person name="Dunn M."/>
            <person name="Johnson C."/>
            <person name="Wood J."/>
            <person name="Clark S."/>
            <person name="Pelan S."/>
            <person name="Griffiths G."/>
            <person name="Smith M."/>
            <person name="Glithero R."/>
            <person name="Howden P."/>
            <person name="Barker N."/>
            <person name="Lloyd C."/>
            <person name="Stevens C."/>
            <person name="Harley J."/>
            <person name="Holt K."/>
            <person name="Panagiotidis G."/>
            <person name="Lovell J."/>
            <person name="Beasley H."/>
            <person name="Henderson C."/>
            <person name="Gordon D."/>
            <person name="Auger K."/>
            <person name="Wright D."/>
            <person name="Collins J."/>
            <person name="Raisen C."/>
            <person name="Dyer L."/>
            <person name="Leung K."/>
            <person name="Robertson L."/>
            <person name="Ambridge K."/>
            <person name="Leongamornlert D."/>
            <person name="McGuire S."/>
            <person name="Gilderthorp R."/>
            <person name="Griffiths C."/>
            <person name="Manthravadi D."/>
            <person name="Nichol S."/>
            <person name="Barker G."/>
            <person name="Whitehead S."/>
            <person name="Kay M."/>
            <person name="Brown J."/>
            <person name="Murnane C."/>
            <person name="Gray E."/>
            <person name="Humphries M."/>
            <person name="Sycamore N."/>
            <person name="Barker D."/>
            <person name="Saunders D."/>
            <person name="Wallis J."/>
            <person name="Babbage A."/>
            <person name="Hammond S."/>
            <person name="Mashreghi-Mohammadi M."/>
            <person name="Barr L."/>
            <person name="Martin S."/>
            <person name="Wray P."/>
            <person name="Ellington A."/>
            <person name="Matthews N."/>
            <person name="Ellwood M."/>
            <person name="Woodmansey R."/>
            <person name="Clark G."/>
            <person name="Cooper J."/>
            <person name="Tromans A."/>
            <person name="Grafham D."/>
            <person name="Skuce C."/>
            <person name="Pandian R."/>
            <person name="Andrews R."/>
            <person name="Harrison E."/>
            <person name="Kimberley A."/>
            <person name="Garnett J."/>
            <person name="Fosker N."/>
            <person name="Hall R."/>
            <person name="Garner P."/>
            <person name="Kelly D."/>
            <person name="Bird C."/>
            <person name="Palmer S."/>
            <person name="Gehring I."/>
            <person name="Berger A."/>
            <person name="Dooley C.M."/>
            <person name="Ersan-Urun Z."/>
            <person name="Eser C."/>
            <person name="Geiger H."/>
            <person name="Geisler M."/>
            <person name="Karotki L."/>
            <person name="Kirn A."/>
            <person name="Konantz J."/>
            <person name="Konantz M."/>
            <person name="Oberlander M."/>
            <person name="Rudolph-Geiger S."/>
            <person name="Teucke M."/>
            <person name="Lanz C."/>
            <person name="Raddatz G."/>
            <person name="Osoegawa K."/>
            <person name="Zhu B."/>
            <person name="Rapp A."/>
            <person name="Widaa S."/>
            <person name="Langford C."/>
            <person name="Yang F."/>
            <person name="Schuster S.C."/>
            <person name="Carter N.P."/>
            <person name="Harrow J."/>
            <person name="Ning Z."/>
            <person name="Herrero J."/>
            <person name="Searle S.M."/>
            <person name="Enright A."/>
            <person name="Geisler R."/>
            <person name="Plasterk R.H."/>
            <person name="Lee C."/>
            <person name="Westerfield M."/>
            <person name="de Jong P.J."/>
            <person name="Zon L.I."/>
            <person name="Postlethwait J.H."/>
            <person name="Nusslein-Volhard C."/>
            <person name="Hubbard T.J."/>
            <person name="Roest Crollius H."/>
            <person name="Rogers J."/>
            <person name="Stemple D.L."/>
        </authorList>
    </citation>
    <scope>NUCLEOTIDE SEQUENCE [LARGE SCALE GENOMIC DNA]</scope>
    <source>
        <strain>Tuebingen</strain>
    </source>
</reference>
<reference key="3">
    <citation type="submission" date="2003-08" db="EMBL/GenBank/DDBJ databases">
        <authorList>
            <consortium name="NIH - Zebrafish Gene Collection (ZGC) project"/>
        </authorList>
    </citation>
    <scope>NUCLEOTIDE SEQUENCE [LARGE SCALE MRNA]</scope>
</reference>
<reference key="4">
    <citation type="journal article" date="2012" name="Cell Res.">
        <title>A SNX10/V-ATPase pathway regulates ciliogenesis in vitro and in vivo.</title>
        <authorList>
            <person name="Chen Y."/>
            <person name="Wu B."/>
            <person name="Xu L."/>
            <person name="Li H."/>
            <person name="Xia J."/>
            <person name="Yin W."/>
            <person name="Li Z."/>
            <person name="Shi D."/>
            <person name="Li S."/>
            <person name="Lin S."/>
            <person name="Shu X."/>
            <person name="Pei D."/>
        </authorList>
    </citation>
    <scope>FUNCTION IN CILIOGENESIS</scope>
</reference>
<protein>
    <recommendedName>
        <fullName>V-type proton ATPase subunit d 1</fullName>
        <shortName>V-ATPase subunit d 1</shortName>
    </recommendedName>
    <alternativeName>
        <fullName>Vacuolar proton pump subunit d 1</fullName>
    </alternativeName>
</protein>
<dbReference type="EMBL" id="CR356247">
    <property type="status" value="NOT_ANNOTATED_CDS"/>
    <property type="molecule type" value="Genomic_DNA"/>
</dbReference>
<dbReference type="EMBL" id="AY648766">
    <property type="protein sequence ID" value="AAT68084.1"/>
    <property type="molecule type" value="mRNA"/>
</dbReference>
<dbReference type="EMBL" id="BC056822">
    <property type="protein sequence ID" value="AAH56822.1"/>
    <property type="molecule type" value="mRNA"/>
</dbReference>
<dbReference type="RefSeq" id="NP_955914.1">
    <property type="nucleotide sequence ID" value="NM_199620.1"/>
</dbReference>
<dbReference type="SMR" id="Q6PGV1"/>
<dbReference type="FunCoup" id="Q6PGV1">
    <property type="interactions" value="3128"/>
</dbReference>
<dbReference type="STRING" id="7955.ENSDARP00000091027"/>
<dbReference type="PaxDb" id="7955-ENSDARP00000091027"/>
<dbReference type="Ensembl" id="ENSDART00000100254">
    <property type="protein sequence ID" value="ENSDARP00000091027"/>
    <property type="gene ID" value="ENSDARG00000069090"/>
</dbReference>
<dbReference type="Ensembl" id="ENSDART00000180216">
    <property type="protein sequence ID" value="ENSDARP00000157519"/>
    <property type="gene ID" value="ENSDARG00000115876"/>
</dbReference>
<dbReference type="GeneID" id="322811"/>
<dbReference type="KEGG" id="dre:322811"/>
<dbReference type="AGR" id="ZFIN:ZDB-GENE-030131-1531"/>
<dbReference type="CTD" id="9114"/>
<dbReference type="ZFIN" id="ZDB-GENE-030131-1531">
    <property type="gene designation" value="atp6v0d1"/>
</dbReference>
<dbReference type="eggNOG" id="KOG2957">
    <property type="taxonomic scope" value="Eukaryota"/>
</dbReference>
<dbReference type="HOGENOM" id="CLU_051277_0_0_1"/>
<dbReference type="InParanoid" id="Q6PGV1"/>
<dbReference type="OMA" id="MTYGYMI"/>
<dbReference type="OrthoDB" id="10250083at2759"/>
<dbReference type="PhylomeDB" id="Q6PGV1"/>
<dbReference type="TreeFam" id="TF300857"/>
<dbReference type="Reactome" id="R-DRE-1222556">
    <property type="pathway name" value="ROS and RNS production in phagocytes"/>
</dbReference>
<dbReference type="Reactome" id="R-DRE-77387">
    <property type="pathway name" value="Insulin receptor recycling"/>
</dbReference>
<dbReference type="Reactome" id="R-DRE-917977">
    <property type="pathway name" value="Transferrin endocytosis and recycling"/>
</dbReference>
<dbReference type="Reactome" id="R-DRE-9639288">
    <property type="pathway name" value="Amino acids regulate mTORC1"/>
</dbReference>
<dbReference type="PRO" id="PR:Q6PGV1"/>
<dbReference type="Proteomes" id="UP000000437">
    <property type="component" value="Alternate scaffold 7"/>
</dbReference>
<dbReference type="Proteomes" id="UP000000437">
    <property type="component" value="Chromosome 7"/>
</dbReference>
<dbReference type="Bgee" id="ENSDARG00000069090">
    <property type="expression patterns" value="Expressed in brain and 26 other cell types or tissues"/>
</dbReference>
<dbReference type="ExpressionAtlas" id="Q6PGV1">
    <property type="expression patterns" value="baseline"/>
</dbReference>
<dbReference type="GO" id="GO:0005769">
    <property type="term" value="C:early endosome"/>
    <property type="evidence" value="ECO:0000318"/>
    <property type="project" value="GO_Central"/>
</dbReference>
<dbReference type="GO" id="GO:0005765">
    <property type="term" value="C:lysosomal membrane"/>
    <property type="evidence" value="ECO:0007669"/>
    <property type="project" value="UniProtKB-SubCell"/>
</dbReference>
<dbReference type="GO" id="GO:0033181">
    <property type="term" value="C:plasma membrane proton-transporting V-type ATPase complex"/>
    <property type="evidence" value="ECO:0000318"/>
    <property type="project" value="GO_Central"/>
</dbReference>
<dbReference type="GO" id="GO:0033179">
    <property type="term" value="C:proton-transporting V-type ATPase, V0 domain"/>
    <property type="evidence" value="ECO:0007669"/>
    <property type="project" value="InterPro"/>
</dbReference>
<dbReference type="GO" id="GO:0016471">
    <property type="term" value="C:vacuolar proton-transporting V-type ATPase complex"/>
    <property type="evidence" value="ECO:0000318"/>
    <property type="project" value="GO_Central"/>
</dbReference>
<dbReference type="GO" id="GO:0046961">
    <property type="term" value="F:proton-transporting ATPase activity, rotational mechanism"/>
    <property type="evidence" value="ECO:0007669"/>
    <property type="project" value="InterPro"/>
</dbReference>
<dbReference type="GO" id="GO:0045176">
    <property type="term" value="P:apical protein localization"/>
    <property type="evidence" value="ECO:0000315"/>
    <property type="project" value="ZFIN"/>
</dbReference>
<dbReference type="GO" id="GO:0036295">
    <property type="term" value="P:cellular response to increased oxygen levels"/>
    <property type="evidence" value="ECO:0000250"/>
    <property type="project" value="UniProtKB"/>
</dbReference>
<dbReference type="GO" id="GO:0060271">
    <property type="term" value="P:cilium assembly"/>
    <property type="evidence" value="ECO:0000315"/>
    <property type="project" value="UniProtKB"/>
</dbReference>
<dbReference type="GO" id="GO:0008057">
    <property type="term" value="P:eye pigment granule organization"/>
    <property type="evidence" value="ECO:0000315"/>
    <property type="project" value="ZFIN"/>
</dbReference>
<dbReference type="GO" id="GO:0001947">
    <property type="term" value="P:heart looping"/>
    <property type="evidence" value="ECO:0000315"/>
    <property type="project" value="ZFIN"/>
</dbReference>
<dbReference type="GO" id="GO:0006879">
    <property type="term" value="P:intracellular iron ion homeostasis"/>
    <property type="evidence" value="ECO:0000250"/>
    <property type="project" value="UniProtKB"/>
</dbReference>
<dbReference type="GO" id="GO:0070986">
    <property type="term" value="P:left/right axis specification"/>
    <property type="evidence" value="ECO:0000315"/>
    <property type="project" value="UniProtKB"/>
</dbReference>
<dbReference type="GO" id="GO:0032438">
    <property type="term" value="P:melanosome organization"/>
    <property type="evidence" value="ECO:0000315"/>
    <property type="project" value="ZFIN"/>
</dbReference>
<dbReference type="GO" id="GO:0035675">
    <property type="term" value="P:neuromast hair cell development"/>
    <property type="evidence" value="ECO:0000315"/>
    <property type="project" value="ZFIN"/>
</dbReference>
<dbReference type="GO" id="GO:0039022">
    <property type="term" value="P:pronephric duct development"/>
    <property type="evidence" value="ECO:0000315"/>
    <property type="project" value="ZFIN"/>
</dbReference>
<dbReference type="GO" id="GO:0046688">
    <property type="term" value="P:response to copper ion"/>
    <property type="evidence" value="ECO:0000315"/>
    <property type="project" value="ZFIN"/>
</dbReference>
<dbReference type="GO" id="GO:0060041">
    <property type="term" value="P:retina development in camera-type eye"/>
    <property type="evidence" value="ECO:0000315"/>
    <property type="project" value="ZFIN"/>
</dbReference>
<dbReference type="GO" id="GO:0003406">
    <property type="term" value="P:retinal pigment epithelium development"/>
    <property type="evidence" value="ECO:0000315"/>
    <property type="project" value="ZFIN"/>
</dbReference>
<dbReference type="GO" id="GO:0007035">
    <property type="term" value="P:vacuolar acidification"/>
    <property type="evidence" value="ECO:0000318"/>
    <property type="project" value="GO_Central"/>
</dbReference>
<dbReference type="GO" id="GO:0007034">
    <property type="term" value="P:vacuolar transport"/>
    <property type="evidence" value="ECO:0000318"/>
    <property type="project" value="GO_Central"/>
</dbReference>
<dbReference type="FunFam" id="1.10.132.50:FF:000002">
    <property type="entry name" value="V-type proton ATPase subunit"/>
    <property type="match status" value="1"/>
</dbReference>
<dbReference type="FunFam" id="1.20.1690.10:FF:000001">
    <property type="entry name" value="V-type proton ATPase subunit"/>
    <property type="match status" value="1"/>
</dbReference>
<dbReference type="FunFam" id="1.20.1690.10:FF:000002">
    <property type="entry name" value="V-type proton ATPase subunit"/>
    <property type="match status" value="1"/>
</dbReference>
<dbReference type="Gene3D" id="1.10.132.50">
    <property type="entry name" value="ATP synthase (C/AC39) subunit, domain 3"/>
    <property type="match status" value="1"/>
</dbReference>
<dbReference type="Gene3D" id="1.20.1690.10">
    <property type="entry name" value="V-type ATP synthase subunit C domain"/>
    <property type="match status" value="2"/>
</dbReference>
<dbReference type="InterPro" id="IPR036079">
    <property type="entry name" value="ATPase_csu/dsu_sf"/>
</dbReference>
<dbReference type="InterPro" id="IPR002843">
    <property type="entry name" value="ATPase_V0-cplx_csu/dsu"/>
</dbReference>
<dbReference type="InterPro" id="IPR016727">
    <property type="entry name" value="ATPase_V0-cplx_dsu"/>
</dbReference>
<dbReference type="InterPro" id="IPR035067">
    <property type="entry name" value="V-type_ATPase_csu/dsu"/>
</dbReference>
<dbReference type="InterPro" id="IPR044911">
    <property type="entry name" value="V-type_ATPase_csu/dsu_dom_3"/>
</dbReference>
<dbReference type="PANTHER" id="PTHR11028">
    <property type="entry name" value="VACUOLAR ATP SYNTHASE SUBUNIT AC39"/>
    <property type="match status" value="1"/>
</dbReference>
<dbReference type="Pfam" id="PF01992">
    <property type="entry name" value="vATP-synt_AC39"/>
    <property type="match status" value="1"/>
</dbReference>
<dbReference type="PIRSF" id="PIRSF018497">
    <property type="entry name" value="V-ATP_synth_D"/>
    <property type="match status" value="1"/>
</dbReference>
<dbReference type="SUPFAM" id="SSF103486">
    <property type="entry name" value="V-type ATP synthase subunit C"/>
    <property type="match status" value="1"/>
</dbReference>
<proteinExistence type="evidence at protein level"/>
<gene>
    <name type="primary">atp6v0d1</name>
    <name type="synonym">cto</name>
    <name type="ORF">zgc:63769</name>
</gene>
<feature type="chain" id="PRO_0000423049" description="V-type proton ATPase subunit d 1">
    <location>
        <begin position="1"/>
        <end position="350"/>
    </location>
</feature>
<organism>
    <name type="scientific">Danio rerio</name>
    <name type="common">Zebrafish</name>
    <name type="synonym">Brachydanio rerio</name>
    <dbReference type="NCBI Taxonomy" id="7955"/>
    <lineage>
        <taxon>Eukaryota</taxon>
        <taxon>Metazoa</taxon>
        <taxon>Chordata</taxon>
        <taxon>Craniata</taxon>
        <taxon>Vertebrata</taxon>
        <taxon>Euteleostomi</taxon>
        <taxon>Actinopterygii</taxon>
        <taxon>Neopterygii</taxon>
        <taxon>Teleostei</taxon>
        <taxon>Ostariophysi</taxon>
        <taxon>Cypriniformes</taxon>
        <taxon>Danionidae</taxon>
        <taxon>Danioninae</taxon>
        <taxon>Danio</taxon>
    </lineage>
</organism>
<evidence type="ECO:0000250" key="1">
    <source>
        <dbReference type="UniProtKB" id="P51863"/>
    </source>
</evidence>
<evidence type="ECO:0000250" key="2">
    <source>
        <dbReference type="UniProtKB" id="P61421"/>
    </source>
</evidence>
<evidence type="ECO:0000269" key="3">
    <source>
    </source>
</evidence>
<evidence type="ECO:0000305" key="4"/>
<name>VA0D1_DANRE</name>